<reference key="1">
    <citation type="submission" date="2006-12" db="EMBL/GenBank/DDBJ databases">
        <title>Complete sequence of Acidovorax avenae subsp. citrulli AAC00-1.</title>
        <authorList>
            <person name="Copeland A."/>
            <person name="Lucas S."/>
            <person name="Lapidus A."/>
            <person name="Barry K."/>
            <person name="Detter J.C."/>
            <person name="Glavina del Rio T."/>
            <person name="Dalin E."/>
            <person name="Tice H."/>
            <person name="Pitluck S."/>
            <person name="Kiss H."/>
            <person name="Brettin T."/>
            <person name="Bruce D."/>
            <person name="Han C."/>
            <person name="Tapia R."/>
            <person name="Gilna P."/>
            <person name="Schmutz J."/>
            <person name="Larimer F."/>
            <person name="Land M."/>
            <person name="Hauser L."/>
            <person name="Kyrpides N."/>
            <person name="Kim E."/>
            <person name="Stahl D."/>
            <person name="Richardson P."/>
        </authorList>
    </citation>
    <scope>NUCLEOTIDE SEQUENCE [LARGE SCALE GENOMIC DNA]</scope>
    <source>
        <strain>AAC00-1</strain>
    </source>
</reference>
<gene>
    <name evidence="1" type="primary">pyrB</name>
    <name type="ordered locus">Aave_0910</name>
</gene>
<proteinExistence type="inferred from homology"/>
<comment type="function">
    <text evidence="1">Catalyzes the condensation of carbamoyl phosphate and aspartate to form carbamoyl aspartate and inorganic phosphate, the committed step in the de novo pyrimidine nucleotide biosynthesis pathway.</text>
</comment>
<comment type="catalytic activity">
    <reaction evidence="1">
        <text>carbamoyl phosphate + L-aspartate = N-carbamoyl-L-aspartate + phosphate + H(+)</text>
        <dbReference type="Rhea" id="RHEA:20013"/>
        <dbReference type="ChEBI" id="CHEBI:15378"/>
        <dbReference type="ChEBI" id="CHEBI:29991"/>
        <dbReference type="ChEBI" id="CHEBI:32814"/>
        <dbReference type="ChEBI" id="CHEBI:43474"/>
        <dbReference type="ChEBI" id="CHEBI:58228"/>
        <dbReference type="EC" id="2.1.3.2"/>
    </reaction>
</comment>
<comment type="pathway">
    <text evidence="1">Pyrimidine metabolism; UMP biosynthesis via de novo pathway; (S)-dihydroorotate from bicarbonate: step 2/3.</text>
</comment>
<comment type="subunit">
    <text evidence="1">Heterododecamer (2C3:3R2) of six catalytic PyrB chains organized as two trimers (C3), and six regulatory PyrI chains organized as three dimers (R2).</text>
</comment>
<comment type="similarity">
    <text evidence="1">Belongs to the aspartate/ornithine carbamoyltransferase superfamily. ATCase family.</text>
</comment>
<evidence type="ECO:0000255" key="1">
    <source>
        <dbReference type="HAMAP-Rule" id="MF_00001"/>
    </source>
</evidence>
<keyword id="KW-0665">Pyrimidine biosynthesis</keyword>
<keyword id="KW-0808">Transferase</keyword>
<dbReference type="EC" id="2.1.3.2" evidence="1"/>
<dbReference type="EMBL" id="CP000512">
    <property type="protein sequence ID" value="ABM31508.1"/>
    <property type="molecule type" value="Genomic_DNA"/>
</dbReference>
<dbReference type="RefSeq" id="WP_011794066.1">
    <property type="nucleotide sequence ID" value="NC_008752.1"/>
</dbReference>
<dbReference type="SMR" id="A1TKM0"/>
<dbReference type="STRING" id="397945.Aave_0910"/>
<dbReference type="KEGG" id="aav:Aave_0910"/>
<dbReference type="eggNOG" id="COG0540">
    <property type="taxonomic scope" value="Bacteria"/>
</dbReference>
<dbReference type="HOGENOM" id="CLU_043846_2_0_4"/>
<dbReference type="OrthoDB" id="9774690at2"/>
<dbReference type="UniPathway" id="UPA00070">
    <property type="reaction ID" value="UER00116"/>
</dbReference>
<dbReference type="Proteomes" id="UP000002596">
    <property type="component" value="Chromosome"/>
</dbReference>
<dbReference type="GO" id="GO:0005829">
    <property type="term" value="C:cytosol"/>
    <property type="evidence" value="ECO:0007669"/>
    <property type="project" value="TreeGrafter"/>
</dbReference>
<dbReference type="GO" id="GO:0016597">
    <property type="term" value="F:amino acid binding"/>
    <property type="evidence" value="ECO:0007669"/>
    <property type="project" value="InterPro"/>
</dbReference>
<dbReference type="GO" id="GO:0004070">
    <property type="term" value="F:aspartate carbamoyltransferase activity"/>
    <property type="evidence" value="ECO:0007669"/>
    <property type="project" value="UniProtKB-UniRule"/>
</dbReference>
<dbReference type="GO" id="GO:0006207">
    <property type="term" value="P:'de novo' pyrimidine nucleobase biosynthetic process"/>
    <property type="evidence" value="ECO:0007669"/>
    <property type="project" value="InterPro"/>
</dbReference>
<dbReference type="GO" id="GO:0044205">
    <property type="term" value="P:'de novo' UMP biosynthetic process"/>
    <property type="evidence" value="ECO:0007669"/>
    <property type="project" value="UniProtKB-UniRule"/>
</dbReference>
<dbReference type="GO" id="GO:0006520">
    <property type="term" value="P:amino acid metabolic process"/>
    <property type="evidence" value="ECO:0007669"/>
    <property type="project" value="InterPro"/>
</dbReference>
<dbReference type="FunFam" id="3.40.50.1370:FF:000007">
    <property type="entry name" value="Aspartate carbamoyltransferase"/>
    <property type="match status" value="1"/>
</dbReference>
<dbReference type="Gene3D" id="3.40.50.1370">
    <property type="entry name" value="Aspartate/ornithine carbamoyltransferase"/>
    <property type="match status" value="2"/>
</dbReference>
<dbReference type="HAMAP" id="MF_00001">
    <property type="entry name" value="Asp_carb_tr"/>
    <property type="match status" value="1"/>
</dbReference>
<dbReference type="InterPro" id="IPR006132">
    <property type="entry name" value="Asp/Orn_carbamoyltranf_P-bd"/>
</dbReference>
<dbReference type="InterPro" id="IPR006130">
    <property type="entry name" value="Asp/Orn_carbamoylTrfase"/>
</dbReference>
<dbReference type="InterPro" id="IPR036901">
    <property type="entry name" value="Asp/Orn_carbamoylTrfase_sf"/>
</dbReference>
<dbReference type="InterPro" id="IPR002082">
    <property type="entry name" value="Asp_carbamoyltransf"/>
</dbReference>
<dbReference type="InterPro" id="IPR006131">
    <property type="entry name" value="Asp_carbamoyltransf_Asp/Orn-bd"/>
</dbReference>
<dbReference type="NCBIfam" id="TIGR00670">
    <property type="entry name" value="asp_carb_tr"/>
    <property type="match status" value="1"/>
</dbReference>
<dbReference type="NCBIfam" id="NF002032">
    <property type="entry name" value="PRK00856.1"/>
    <property type="match status" value="1"/>
</dbReference>
<dbReference type="PANTHER" id="PTHR45753:SF6">
    <property type="entry name" value="ASPARTATE CARBAMOYLTRANSFERASE"/>
    <property type="match status" value="1"/>
</dbReference>
<dbReference type="PANTHER" id="PTHR45753">
    <property type="entry name" value="ORNITHINE CARBAMOYLTRANSFERASE, MITOCHONDRIAL"/>
    <property type="match status" value="1"/>
</dbReference>
<dbReference type="Pfam" id="PF00185">
    <property type="entry name" value="OTCace"/>
    <property type="match status" value="1"/>
</dbReference>
<dbReference type="Pfam" id="PF02729">
    <property type="entry name" value="OTCace_N"/>
    <property type="match status" value="1"/>
</dbReference>
<dbReference type="PRINTS" id="PR00100">
    <property type="entry name" value="AOTCASE"/>
</dbReference>
<dbReference type="PRINTS" id="PR00101">
    <property type="entry name" value="ATCASE"/>
</dbReference>
<dbReference type="SUPFAM" id="SSF53671">
    <property type="entry name" value="Aspartate/ornithine carbamoyltransferase"/>
    <property type="match status" value="1"/>
</dbReference>
<dbReference type="PROSITE" id="PS00097">
    <property type="entry name" value="CARBAMOYLTRANSFERASE"/>
    <property type="match status" value="1"/>
</dbReference>
<name>PYRB_PARC0</name>
<feature type="chain" id="PRO_0000321062" description="Aspartate carbamoyltransferase catalytic subunit">
    <location>
        <begin position="1"/>
        <end position="320"/>
    </location>
</feature>
<feature type="binding site" evidence="1">
    <location>
        <position position="68"/>
    </location>
    <ligand>
        <name>carbamoyl phosphate</name>
        <dbReference type="ChEBI" id="CHEBI:58228"/>
    </ligand>
</feature>
<feature type="binding site" evidence="1">
    <location>
        <position position="69"/>
    </location>
    <ligand>
        <name>carbamoyl phosphate</name>
        <dbReference type="ChEBI" id="CHEBI:58228"/>
    </ligand>
</feature>
<feature type="binding site" evidence="1">
    <location>
        <position position="96"/>
    </location>
    <ligand>
        <name>L-aspartate</name>
        <dbReference type="ChEBI" id="CHEBI:29991"/>
    </ligand>
</feature>
<feature type="binding site" evidence="1">
    <location>
        <position position="118"/>
    </location>
    <ligand>
        <name>carbamoyl phosphate</name>
        <dbReference type="ChEBI" id="CHEBI:58228"/>
    </ligand>
</feature>
<feature type="binding site" evidence="1">
    <location>
        <position position="148"/>
    </location>
    <ligand>
        <name>carbamoyl phosphate</name>
        <dbReference type="ChEBI" id="CHEBI:58228"/>
    </ligand>
</feature>
<feature type="binding site" evidence="1">
    <location>
        <position position="151"/>
    </location>
    <ligand>
        <name>carbamoyl phosphate</name>
        <dbReference type="ChEBI" id="CHEBI:58228"/>
    </ligand>
</feature>
<feature type="binding site" evidence="1">
    <location>
        <position position="181"/>
    </location>
    <ligand>
        <name>L-aspartate</name>
        <dbReference type="ChEBI" id="CHEBI:29991"/>
    </ligand>
</feature>
<feature type="binding site" evidence="1">
    <location>
        <position position="236"/>
    </location>
    <ligand>
        <name>L-aspartate</name>
        <dbReference type="ChEBI" id="CHEBI:29991"/>
    </ligand>
</feature>
<feature type="binding site" evidence="1">
    <location>
        <position position="277"/>
    </location>
    <ligand>
        <name>carbamoyl phosphate</name>
        <dbReference type="ChEBI" id="CHEBI:58228"/>
    </ligand>
</feature>
<feature type="binding site" evidence="1">
    <location>
        <position position="278"/>
    </location>
    <ligand>
        <name>carbamoyl phosphate</name>
        <dbReference type="ChEBI" id="CHEBI:58228"/>
    </ligand>
</feature>
<sequence>MLSKRNPQLNRNGELIHLLSIEGLPRSIVTHILDTAANFVSVNDREVKKVPLLRGKSVFNLFFENSTRTRTTFEIAAKRLSADVLNLDIARSSASKGESLLDTIANLSAMAADLFVVRHSESGAPYLIAQHVAPHVHVINAGDGRHAHPTQGLLDMYTIRHYKKDFSNLTVAIVGDVLHSRVARSDIHGLTTLGCPEVRVVGPRTLVPGDLSHMGVRVCHTLEEGIRDADVVIMLRLQNERMSGALLPSSQEYFKSFGLTPEKLRLAKPDAIVMHPGPINRGVEIDSAVVDGPQAVILPQVTFGIAVRMAVMSIVAGNEA</sequence>
<organism>
    <name type="scientific">Paracidovorax citrulli (strain AAC00-1)</name>
    <name type="common">Acidovorax citrulli</name>
    <dbReference type="NCBI Taxonomy" id="397945"/>
    <lineage>
        <taxon>Bacteria</taxon>
        <taxon>Pseudomonadati</taxon>
        <taxon>Pseudomonadota</taxon>
        <taxon>Betaproteobacteria</taxon>
        <taxon>Burkholderiales</taxon>
        <taxon>Comamonadaceae</taxon>
        <taxon>Paracidovorax</taxon>
    </lineage>
</organism>
<accession>A1TKM0</accession>
<protein>
    <recommendedName>
        <fullName evidence="1">Aspartate carbamoyltransferase catalytic subunit</fullName>
        <ecNumber evidence="1">2.1.3.2</ecNumber>
    </recommendedName>
    <alternativeName>
        <fullName evidence="1">Aspartate transcarbamylase</fullName>
        <shortName evidence="1">ATCase</shortName>
    </alternativeName>
</protein>